<dbReference type="EC" id="2.4.1.329" evidence="2"/>
<dbReference type="EMBL" id="CP002171">
    <property type="protein sequence ID" value="ADL69407.1"/>
    <property type="molecule type" value="Genomic_DNA"/>
</dbReference>
<dbReference type="RefSeq" id="WP_013298373.1">
    <property type="nucleotide sequence ID" value="NC_014410.1"/>
</dbReference>
<dbReference type="PDB" id="6S9V">
    <property type="method" value="X-ray"/>
    <property type="resolution" value="1.83 A"/>
    <property type="chains" value="A/B=1-488"/>
</dbReference>
<dbReference type="PDBsum" id="6S9V"/>
<dbReference type="SMR" id="D9TT09"/>
<dbReference type="STRING" id="580327.Tthe_1921"/>
<dbReference type="CAZy" id="GH13">
    <property type="family name" value="Glycoside Hydrolase Family 13"/>
</dbReference>
<dbReference type="GeneID" id="93864741"/>
<dbReference type="KEGG" id="ttm:Tthe_1921"/>
<dbReference type="eggNOG" id="COG0366">
    <property type="taxonomic scope" value="Bacteria"/>
</dbReference>
<dbReference type="HOGENOM" id="CLU_021358_1_0_9"/>
<dbReference type="OrthoDB" id="9805159at2"/>
<dbReference type="BioCyc" id="MetaCyc:MONOMER-18710"/>
<dbReference type="BRENDA" id="2.4.1.329">
    <property type="organism ID" value="1533"/>
</dbReference>
<dbReference type="SABIO-RK" id="D9TT09"/>
<dbReference type="Proteomes" id="UP000001626">
    <property type="component" value="Chromosome"/>
</dbReference>
<dbReference type="GO" id="GO:0004645">
    <property type="term" value="F:1,4-alpha-oligoglucan phosphorylase activity"/>
    <property type="evidence" value="ECO:0007669"/>
    <property type="project" value="InterPro"/>
</dbReference>
<dbReference type="GO" id="GO:0016758">
    <property type="term" value="F:hexosyltransferase activity"/>
    <property type="evidence" value="ECO:0000314"/>
    <property type="project" value="UniProtKB"/>
</dbReference>
<dbReference type="GO" id="GO:0005975">
    <property type="term" value="P:carbohydrate metabolic process"/>
    <property type="evidence" value="ECO:0007669"/>
    <property type="project" value="InterPro"/>
</dbReference>
<dbReference type="CDD" id="cd11355">
    <property type="entry name" value="AmyAc_Sucrose_phosphorylase"/>
    <property type="match status" value="1"/>
</dbReference>
<dbReference type="Gene3D" id="3.20.20.80">
    <property type="entry name" value="Glycosidases"/>
    <property type="match status" value="1"/>
</dbReference>
<dbReference type="Gene3D" id="3.90.400.10">
    <property type="entry name" value="Oligo-1,6-glucosidase, Domain 2"/>
    <property type="match status" value="1"/>
</dbReference>
<dbReference type="InterPro" id="IPR006047">
    <property type="entry name" value="Glyco_hydro_13_cat_dom"/>
</dbReference>
<dbReference type="InterPro" id="IPR017853">
    <property type="entry name" value="Glycoside_hydrolase_SF"/>
</dbReference>
<dbReference type="InterPro" id="IPR045857">
    <property type="entry name" value="O16G_dom_2"/>
</dbReference>
<dbReference type="InterPro" id="IPR016377">
    <property type="entry name" value="Sucrose_GGa_phosphorylase-rel"/>
</dbReference>
<dbReference type="InterPro" id="IPR022527">
    <property type="entry name" value="Sucrose_phospho"/>
</dbReference>
<dbReference type="NCBIfam" id="TIGR03852">
    <property type="entry name" value="sucrose_gtfA"/>
    <property type="match status" value="1"/>
</dbReference>
<dbReference type="PANTHER" id="PTHR38784">
    <property type="entry name" value="SUCROSE PHOSPHORYLASE"/>
    <property type="match status" value="1"/>
</dbReference>
<dbReference type="PANTHER" id="PTHR38784:SF1">
    <property type="entry name" value="SUCROSE PHOSPHORYLASE"/>
    <property type="match status" value="1"/>
</dbReference>
<dbReference type="Pfam" id="PF00128">
    <property type="entry name" value="Alpha-amylase"/>
    <property type="match status" value="1"/>
</dbReference>
<dbReference type="PIRSF" id="PIRSF003059">
    <property type="entry name" value="Sucrose_phosphorylase"/>
    <property type="match status" value="1"/>
</dbReference>
<dbReference type="SMART" id="SM00642">
    <property type="entry name" value="Aamy"/>
    <property type="match status" value="1"/>
</dbReference>
<dbReference type="SUPFAM" id="SSF51445">
    <property type="entry name" value="(Trans)glycosidases"/>
    <property type="match status" value="1"/>
</dbReference>
<name>SUCPP_THETC</name>
<comment type="function">
    <text evidence="2 3">Catalyzes the reversible phosphorolysis of sucrose 6(F)-phosphate into alpha-D-glucose 1-phosphate (Glc1P) and D-fructose 6-phosphate. May be involved in a new pathway for the degradation of sucrose, which could become phosphorylated on its fructose moiety during uptake via a PTS system. To a lesser extent, can also reversibly act on sucrose in vitro (PubMed:24599311). Is also able to catalyze transglycosylation reactions in vitro (PubMed:26074151).</text>
</comment>
<comment type="catalytic activity">
    <reaction evidence="2">
        <text>sucrose 6(F)-phosphate + phosphate = beta-D-fructose 6-phosphate + alpha-D-glucose 1-phosphate</text>
        <dbReference type="Rhea" id="RHEA:38863"/>
        <dbReference type="ChEBI" id="CHEBI:43474"/>
        <dbReference type="ChEBI" id="CHEBI:57634"/>
        <dbReference type="ChEBI" id="CHEBI:57723"/>
        <dbReference type="ChEBI" id="CHEBI:58601"/>
        <dbReference type="EC" id="2.4.1.329"/>
    </reaction>
    <physiologicalReaction direction="left-to-right" evidence="7">
        <dbReference type="Rhea" id="RHEA:38864"/>
    </physiologicalReaction>
</comment>
<comment type="biophysicochemical properties">
    <kinetics>
        <KM evidence="2">6.9 mM for phosphate (at 55 degrees Celsius and pH 6.5)</KM>
        <KM evidence="2">12.7 mM for sucrose 6(F)-phosphate (at 55 degrees Celsius and pH 6.5)</KM>
        <KM evidence="2">76.5 mM for sucrose (at 55 degrees Celsius and pH 6.5)</KM>
        <KM evidence="2">15.1 mM for D-fructose 6-phosphate (at 55 degrees Celsius and pH 6.0)</KM>
        <KM evidence="2">15.6 mM for alpha-D-glucose 1-phosphate (at 55 degrees Celsius and pH 6.0)</KM>
        <KM evidence="2">41.6 mM for D-fructose (at 55 degrees Celsius and pH 6.0)</KM>
        <text evidence="2">kcat is 82.6 sec(-1) for the phosphorolysis of sucrose 6(F)-phosphate (at 55 degrees Celsius and pH 6.5). kcat is 66.2 sec(-1) for the phosphorolysis of sucrose (at 55 degrees Celsius and pH 6.5). kcat is 24.2 sec(-1) for the synthetic direction with alpha-D-glucose 1-phosphate and D-fructose 6-phosphate as substrates (at 55 degrees Celsius and pH 6.0). kcat is 14.4 sec(-1) for the synthetic direction with alpha-D-glucose 1-phosphate and D-fructose as substrates (at 55 degrees Celsius and pH 6.0).</text>
    </kinetics>
    <phDependence>
        <text evidence="2">Optimum pH is 6 and 6.5 for the synthetic and phosphorolytic reaction, respectively. Thermostable. Has a half-life of 60 hours at 60 degrees Celsius.</text>
    </phDependence>
    <temperatureDependence>
        <text evidence="2">Optimum temperature is 55 degrees Celsius.</text>
    </temperatureDependence>
</comment>
<comment type="subunit">
    <text evidence="4">Monomer.</text>
</comment>
<comment type="biotechnology">
    <text evidence="8">The mutant Ala-134 is a promising new biocatalyst for glycosylation reactions on bulky phenolic acceptors.</text>
</comment>
<comment type="similarity">
    <text evidence="6">Belongs to the glycosyl hydrolase 13 family. Sucrose phosphorylase subfamily.</text>
</comment>
<gene>
    <name evidence="5" type="primary">spp</name>
    <name type="ordered locus">Tthe_1921</name>
</gene>
<keyword id="KW-0002">3D-structure</keyword>
<keyword id="KW-0119">Carbohydrate metabolism</keyword>
<keyword id="KW-0328">Glycosyltransferase</keyword>
<keyword id="KW-1185">Reference proteome</keyword>
<keyword id="KW-0808">Transferase</keyword>
<proteinExistence type="evidence at protein level"/>
<protein>
    <recommendedName>
        <fullName evidence="7">Sucrose 6(F)-phosphate phosphorylase</fullName>
        <ecNumber evidence="2">2.4.1.329</ecNumber>
    </recommendedName>
    <alternativeName>
        <fullName evidence="5">Sucrose 6'-phosphate phosphorylase</fullName>
        <shortName evidence="5">SPP</shortName>
    </alternativeName>
</protein>
<feature type="chain" id="PRO_0000430937" description="Sucrose 6(F)-phosphate phosphorylase">
    <location>
        <begin position="1"/>
        <end position="488"/>
    </location>
</feature>
<feature type="active site" description="Nucleophile" evidence="9">
    <location>
        <position position="197"/>
    </location>
</feature>
<feature type="active site" description="Proton donor/acceptor" evidence="9">
    <location>
        <position position="238"/>
    </location>
</feature>
<feature type="binding site" evidence="1">
    <location>
        <position position="49"/>
    </location>
    <ligand>
        <name>sucrose 6(F)-phosphate</name>
        <dbReference type="ChEBI" id="CHEBI:57723"/>
    </ligand>
</feature>
<feature type="binding site" evidence="1">
    <location>
        <position position="87"/>
    </location>
    <ligand>
        <name>sucrose 6(F)-phosphate</name>
        <dbReference type="ChEBI" id="CHEBI:57723"/>
    </ligand>
</feature>
<feature type="binding site" evidence="1">
    <location>
        <begin position="195"/>
        <end position="197"/>
    </location>
    <ligand>
        <name>sucrose 6(F)-phosphate</name>
        <dbReference type="ChEBI" id="CHEBI:57723"/>
    </ligand>
</feature>
<feature type="binding site" evidence="1">
    <location>
        <position position="238"/>
    </location>
    <ligand>
        <name>sucrose 6(F)-phosphate</name>
        <dbReference type="ChEBI" id="CHEBI:57723"/>
    </ligand>
</feature>
<feature type="binding site" evidence="1">
    <location>
        <begin position="295"/>
        <end position="296"/>
    </location>
    <ligand>
        <name>sucrose 6(F)-phosphate</name>
        <dbReference type="ChEBI" id="CHEBI:57723"/>
    </ligand>
</feature>
<feature type="binding site" evidence="1">
    <location>
        <begin position="342"/>
        <end position="345"/>
    </location>
    <ligand>
        <name>sucrose 6(F)-phosphate</name>
        <dbReference type="ChEBI" id="CHEBI:57723"/>
    </ligand>
</feature>
<feature type="binding site" evidence="1">
    <location>
        <position position="399"/>
    </location>
    <ligand>
        <name>sucrose 6(F)-phosphate</name>
        <dbReference type="ChEBI" id="CHEBI:57723"/>
    </ligand>
</feature>
<feature type="site" description="Transition state stabilizer" evidence="9">
    <location>
        <position position="296"/>
    </location>
</feature>
<feature type="mutagenesis site" description="Shows a decreased ratio of activity on phosphorylated fructose over fructose. Displays increased transglycosylation activity on a broad range of bulky acceptors." evidence="2 3">
    <original>R</original>
    <variation>A</variation>
    <location>
        <position position="134"/>
    </location>
</feature>
<feature type="mutagenesis site" description="Displays similar activity as the wild-type." evidence="2">
    <original>R</original>
    <variation>A</variation>
    <location>
        <position position="135"/>
    </location>
</feature>
<feature type="mutagenesis site" description="Displays similar activity as the wild-type." evidence="2">
    <original>K</original>
    <variation>A</variation>
    <location>
        <position position="301"/>
    </location>
</feature>
<feature type="mutagenesis site" description="Shows a decreased ratio of activity on phosphorylated fructose over fructose." evidence="2">
    <original>H</original>
    <variation>Y</variation>
    <location>
        <position position="344"/>
    </location>
</feature>
<feature type="strand" evidence="11">
    <location>
        <begin position="8"/>
        <end position="11"/>
    </location>
</feature>
<feature type="helix" evidence="11">
    <location>
        <begin position="20"/>
        <end position="30"/>
    </location>
</feature>
<feature type="turn" evidence="11">
    <location>
        <begin position="32"/>
        <end position="34"/>
    </location>
</feature>
<feature type="strand" evidence="11">
    <location>
        <begin position="36"/>
        <end position="40"/>
    </location>
</feature>
<feature type="strand" evidence="11">
    <location>
        <begin position="46"/>
        <end position="48"/>
    </location>
</feature>
<feature type="helix" evidence="11">
    <location>
        <begin position="49"/>
        <end position="51"/>
    </location>
</feature>
<feature type="strand" evidence="11">
    <location>
        <begin position="53"/>
        <end position="55"/>
    </location>
</feature>
<feature type="strand" evidence="11">
    <location>
        <begin position="57"/>
        <end position="59"/>
    </location>
</feature>
<feature type="turn" evidence="11">
    <location>
        <begin position="62"/>
        <end position="64"/>
    </location>
</feature>
<feature type="helix" evidence="11">
    <location>
        <begin position="67"/>
        <end position="74"/>
    </location>
</feature>
<feature type="strand" evidence="11">
    <location>
        <begin position="77"/>
        <end position="83"/>
    </location>
</feature>
<feature type="strand" evidence="11">
    <location>
        <begin position="85"/>
        <end position="89"/>
    </location>
</feature>
<feature type="helix" evidence="11">
    <location>
        <begin position="93"/>
        <end position="101"/>
    </location>
</feature>
<feature type="helix" evidence="11">
    <location>
        <begin position="102"/>
        <end position="104"/>
    </location>
</feature>
<feature type="helix" evidence="11">
    <location>
        <begin position="108"/>
        <end position="110"/>
    </location>
</feature>
<feature type="helix" evidence="11">
    <location>
        <begin position="114"/>
        <end position="116"/>
    </location>
</feature>
<feature type="helix" evidence="11">
    <location>
        <begin position="125"/>
        <end position="128"/>
    </location>
</feature>
<feature type="strand" evidence="11">
    <location>
        <begin position="134"/>
        <end position="143"/>
    </location>
</feature>
<feature type="turn" evidence="11">
    <location>
        <begin position="145"/>
        <end position="147"/>
    </location>
</feature>
<feature type="strand" evidence="11">
    <location>
        <begin position="150"/>
        <end position="154"/>
    </location>
</feature>
<feature type="strand" evidence="11">
    <location>
        <begin position="159"/>
        <end position="162"/>
    </location>
</feature>
<feature type="strand" evidence="11">
    <location>
        <begin position="164"/>
        <end position="168"/>
    </location>
</feature>
<feature type="helix" evidence="11">
    <location>
        <begin position="173"/>
        <end position="188"/>
    </location>
</feature>
<feature type="strand" evidence="11">
    <location>
        <begin position="193"/>
        <end position="196"/>
    </location>
</feature>
<feature type="helix" evidence="11">
    <location>
        <begin position="199"/>
        <end position="201"/>
    </location>
</feature>
<feature type="strand" evidence="11">
    <location>
        <begin position="210"/>
        <end position="212"/>
    </location>
</feature>
<feature type="helix" evidence="11">
    <location>
        <begin position="216"/>
        <end position="230"/>
    </location>
</feature>
<feature type="strand" evidence="11">
    <location>
        <begin position="234"/>
        <end position="237"/>
    </location>
</feature>
<feature type="helix" evidence="11">
    <location>
        <begin position="243"/>
        <end position="251"/>
    </location>
</feature>
<feature type="strand" evidence="11">
    <location>
        <begin position="255"/>
        <end position="257"/>
    </location>
</feature>
<feature type="helix" evidence="11">
    <location>
        <begin position="261"/>
        <end position="271"/>
    </location>
</feature>
<feature type="helix" evidence="11">
    <location>
        <begin position="275"/>
        <end position="281"/>
    </location>
</feature>
<feature type="strand" evidence="11">
    <location>
        <begin position="288"/>
        <end position="290"/>
    </location>
</feature>
<feature type="turn" evidence="11">
    <location>
        <begin position="301"/>
        <end position="307"/>
    </location>
</feature>
<feature type="helix" evidence="11">
    <location>
        <begin position="310"/>
        <end position="322"/>
    </location>
</feature>
<feature type="strand" evidence="11">
    <location>
        <begin position="326"/>
        <end position="329"/>
    </location>
</feature>
<feature type="helix" evidence="11">
    <location>
        <begin position="333"/>
        <end position="335"/>
    </location>
</feature>
<feature type="strand" evidence="11">
    <location>
        <begin position="343"/>
        <end position="348"/>
    </location>
</feature>
<feature type="helix" evidence="11">
    <location>
        <begin position="350"/>
        <end position="353"/>
    </location>
</feature>
<feature type="turn" evidence="11">
    <location>
        <begin position="354"/>
        <end position="356"/>
    </location>
</feature>
<feature type="helix" evidence="11">
    <location>
        <begin position="358"/>
        <end position="370"/>
    </location>
</feature>
<feature type="strand" evidence="11">
    <location>
        <begin position="371"/>
        <end position="378"/>
    </location>
</feature>
<feature type="helix" evidence="11">
    <location>
        <begin position="379"/>
        <end position="382"/>
    </location>
</feature>
<feature type="helix" evidence="11">
    <location>
        <begin position="389"/>
        <end position="395"/>
    </location>
</feature>
<feature type="helix" evidence="11">
    <location>
        <begin position="398"/>
        <end position="402"/>
    </location>
</feature>
<feature type="helix" evidence="11">
    <location>
        <begin position="408"/>
        <end position="414"/>
    </location>
</feature>
<feature type="helix" evidence="11">
    <location>
        <begin position="418"/>
        <end position="432"/>
    </location>
</feature>
<feature type="helix" evidence="11">
    <location>
        <begin position="434"/>
        <end position="437"/>
    </location>
</feature>
<feature type="strand" evidence="11">
    <location>
        <begin position="438"/>
        <end position="442"/>
    </location>
</feature>
<feature type="strand" evidence="11">
    <location>
        <begin position="449"/>
        <end position="456"/>
    </location>
</feature>
<feature type="strand" evidence="11">
    <location>
        <begin position="459"/>
        <end position="466"/>
    </location>
</feature>
<feature type="turn" evidence="11">
    <location>
        <begin position="467"/>
        <end position="469"/>
    </location>
</feature>
<feature type="strand" evidence="11">
    <location>
        <begin position="472"/>
        <end position="477"/>
    </location>
</feature>
<feature type="strand" evidence="11">
    <location>
        <begin position="483"/>
        <end position="487"/>
    </location>
</feature>
<sequence>MALKNKVQLITYPDSLGGNLKTLNDVLEKYFSDVFGGVHILPPFPSSGDRGFAPITYSEIEPKFGTWYDIKKMAENFDILLDLMVNHVSRRSIYFQDFLKKGRKSEYADMFITLDKLWKDGKPVKGDIEKMFLRRTLPYSTFKIEETGEEEKVWTTFGKTDPSEQIDLDVNSHLVREFLLEVFKTFSNFGVKIVRLDAVGYVIKKIGTSCFFVEPEIYEFLDWAKGQAASYGIELLLEVHSQFEVQYKLAERGFLIYDFILPFTVLYTLINKSNEMLYHYLKNRPINQFTMLDCHDGIPVKPDLDGLIDTKKAKEVVDICVQRGANLSLIYGDKYKSEDGFDVHQINCTYYSALNCDDDAYLAARAIQFFTPGIPQVYYVGLLAGVNDFEAVKKTKEGREINRHNYGLKEIEESVQKNVVQRLLKLIRFRNEYEAFNGEFFIEDCRKDEIRLTWKKDDKRCSLFIDLKTYKTTIDYINENGEEVKYLV</sequence>
<evidence type="ECO:0000250" key="1">
    <source>
        <dbReference type="UniProtKB" id="A0ZZH6"/>
    </source>
</evidence>
<evidence type="ECO:0000269" key="2">
    <source>
    </source>
</evidence>
<evidence type="ECO:0000269" key="3">
    <source>
    </source>
</evidence>
<evidence type="ECO:0000269" key="4">
    <source>
    </source>
</evidence>
<evidence type="ECO:0000303" key="5">
    <source>
    </source>
</evidence>
<evidence type="ECO:0000305" key="6"/>
<evidence type="ECO:0000305" key="7">
    <source>
    </source>
</evidence>
<evidence type="ECO:0000305" key="8">
    <source>
    </source>
</evidence>
<evidence type="ECO:0000305" key="9">
    <source>
    </source>
</evidence>
<evidence type="ECO:0007744" key="10">
    <source>
        <dbReference type="PDB" id="6S9V"/>
    </source>
</evidence>
<evidence type="ECO:0007829" key="11">
    <source>
        <dbReference type="PDB" id="6S9V"/>
    </source>
</evidence>
<reference key="1">
    <citation type="submission" date="2010-08" db="EMBL/GenBank/DDBJ databases">
        <title>Complete sequence of Thermoanaerobacterium thermosaccharolyticum DSM 571.</title>
        <authorList>
            <consortium name="US DOE Joint Genome Institute"/>
            <person name="Lucas S."/>
            <person name="Copeland A."/>
            <person name="Lapidus A."/>
            <person name="Cheng J.-F."/>
            <person name="Bruce D."/>
            <person name="Goodwin L."/>
            <person name="Pitluck S."/>
            <person name="Teshima H."/>
            <person name="Detter J.C."/>
            <person name="Han C."/>
            <person name="Tapia R."/>
            <person name="Land M."/>
            <person name="Hauser L."/>
            <person name="Chang Y.-J."/>
            <person name="Jeffries C."/>
            <person name="Kyrpides N."/>
            <person name="Ivanova N."/>
            <person name="Mikhailova N."/>
            <person name="Hemme C.L."/>
            <person name="Woyke T."/>
        </authorList>
    </citation>
    <scope>NUCLEOTIDE SEQUENCE [LARGE SCALE GENOMIC DNA]</scope>
    <source>
        <strain>ATCC 7956 / DSM 571 / NCIMB 9385 / NCA 3814 / NCTC 13789 / WDCM 00135 / 2032</strain>
    </source>
</reference>
<reference key="2">
    <citation type="journal article" date="2014" name="Appl. Microbiol. Biotechnol.">
        <title>The quest for a thermostable sucrose phosphorylase reveals sucrose 6'-phosphate phosphorylase as a novel specificity.</title>
        <authorList>
            <person name="Verhaeghe T."/>
            <person name="Aerts D."/>
            <person name="Diricks M."/>
            <person name="Soetaert W."/>
            <person name="Desmet T."/>
        </authorList>
    </citation>
    <scope>FUNCTION</scope>
    <scope>CATALYTIC ACTIVITY</scope>
    <scope>SUBSTRATE SPECIFICITY</scope>
    <scope>BIOPHYSICOCHEMICAL PROPERTIES</scope>
    <scope>MUTAGENESIS OF ARG-134; ARG-135; LYS-301 AND HIS-344</scope>
    <scope>3D-STRUCTURE MODELING</scope>
</reference>
<reference key="3">
    <citation type="journal article" date="2015" name="Angew. Chem. Int. Ed.">
        <title>Creating space for large acceptors: rational biocatalyst design for resveratrol glycosylation in an aqueous system.</title>
        <authorList>
            <person name="Dirks-Hofmeister M.E."/>
            <person name="Verhaeghe T."/>
            <person name="De Winter K."/>
            <person name="Desmet T."/>
        </authorList>
    </citation>
    <scope>MUTAGENESIS OF ARG-134</scope>
    <scope>BIOTECHNOLOGY</scope>
    <scope>FUNCTION</scope>
</reference>
<reference evidence="10" key="4">
    <citation type="journal article" date="2019" name="Int. J. Mol. Sci.">
        <title>Structural Comparison of a Promiscuous and a Highly Specific Sucrose 6F-Phosphate Phosphorylase.</title>
        <authorList>
            <person name="Franceus J."/>
            <person name="Capra N."/>
            <person name="Desmet T."/>
            <person name="Thunnissen A.W.H."/>
        </authorList>
    </citation>
    <scope>X-RAY CRYSTALLOGRAPHY (1.83 ANGSTROMS)</scope>
    <scope>SUBUNIT</scope>
    <scope>ACTIVE SITE</scope>
</reference>
<accession>D9TT09</accession>
<organism>
    <name type="scientific">Thermoanaerobacterium thermosaccharolyticum (strain ATCC 7956 / DSM 571 / NCIMB 9385 / NCA 3814 / NCTC 13789 / WDCM 00135 / 2032)</name>
    <name type="common">Clostridium thermosaccharolyticum</name>
    <dbReference type="NCBI Taxonomy" id="580327"/>
    <lineage>
        <taxon>Bacteria</taxon>
        <taxon>Bacillati</taxon>
        <taxon>Bacillota</taxon>
        <taxon>Clostridia</taxon>
        <taxon>Thermoanaerobacterales</taxon>
        <taxon>Thermoanaerobacteraceae</taxon>
        <taxon>Thermoanaerobacterium</taxon>
    </lineage>
</organism>